<feature type="chain" id="PRO_0000293678" description="Probable succinate transporter subunit YjjB">
    <location>
        <begin position="1"/>
        <end position="157"/>
    </location>
</feature>
<feature type="transmembrane region" description="Helical" evidence="1">
    <location>
        <begin position="8"/>
        <end position="28"/>
    </location>
</feature>
<feature type="transmembrane region" description="Helical" evidence="1">
    <location>
        <begin position="50"/>
        <end position="70"/>
    </location>
</feature>
<feature type="transmembrane region" description="Helical" evidence="1">
    <location>
        <begin position="87"/>
        <end position="107"/>
    </location>
</feature>
<feature type="transmembrane region" description="Helical" evidence="1">
    <location>
        <begin position="129"/>
        <end position="149"/>
    </location>
</feature>
<feature type="sequence conflict" description="In Ref. 2; AAN45809." evidence="2" ref="2">
    <original>G</original>
    <variation>R</variation>
    <location>
        <position position="147"/>
    </location>
</feature>
<evidence type="ECO:0000255" key="1">
    <source>
        <dbReference type="HAMAP-Rule" id="MF_01191"/>
    </source>
</evidence>
<evidence type="ECO:0000305" key="2"/>
<organism>
    <name type="scientific">Shigella flexneri</name>
    <dbReference type="NCBI Taxonomy" id="623"/>
    <lineage>
        <taxon>Bacteria</taxon>
        <taxon>Pseudomonadati</taxon>
        <taxon>Pseudomonadota</taxon>
        <taxon>Gammaproteobacteria</taxon>
        <taxon>Enterobacterales</taxon>
        <taxon>Enterobacteriaceae</taxon>
        <taxon>Shigella</taxon>
    </lineage>
</organism>
<sequence>MGVIEFLLALAQDMILAAIPAVGFAMVFNVPVRALRWCALLGSIGHGSRMILMTSGLNIEWSTFMASMLVGTIGIQWSRWYLAHPKVFTVAAVIPMFPGISAYTAMISSVKISQLGYSEPLMITLLTNFLTASSIVGALSIGLSIPGLWLYRKRPRV</sequence>
<dbReference type="EMBL" id="AE014073">
    <property type="protein sequence ID" value="AAP19587.1"/>
    <property type="molecule type" value="Genomic_DNA"/>
</dbReference>
<dbReference type="EMBL" id="AE005674">
    <property type="protein sequence ID" value="AAN45809.2"/>
    <property type="molecule type" value="Genomic_DNA"/>
</dbReference>
<dbReference type="RefSeq" id="WP_000538192.1">
    <property type="nucleotide sequence ID" value="NZ_WPGW01000045.1"/>
</dbReference>
<dbReference type="STRING" id="198214.SF4394"/>
<dbReference type="PaxDb" id="198214-SF4394"/>
<dbReference type="KEGG" id="sfx:S4664"/>
<dbReference type="PATRIC" id="fig|623.156.peg.2983"/>
<dbReference type="HOGENOM" id="CLU_117642_1_0_6"/>
<dbReference type="Proteomes" id="UP000001006">
    <property type="component" value="Chromosome"/>
</dbReference>
<dbReference type="Proteomes" id="UP000002673">
    <property type="component" value="Chromosome"/>
</dbReference>
<dbReference type="GO" id="GO:0005886">
    <property type="term" value="C:plasma membrane"/>
    <property type="evidence" value="ECO:0007669"/>
    <property type="project" value="UniProtKB-SubCell"/>
</dbReference>
<dbReference type="GO" id="GO:0015744">
    <property type="term" value="P:succinate transport"/>
    <property type="evidence" value="ECO:0007669"/>
    <property type="project" value="UniProtKB-UniRule"/>
</dbReference>
<dbReference type="HAMAP" id="MF_01191">
    <property type="entry name" value="YjjB"/>
    <property type="match status" value="1"/>
</dbReference>
<dbReference type="InterPro" id="IPR024528">
    <property type="entry name" value="ThrE_2"/>
</dbReference>
<dbReference type="InterPro" id="IPR050539">
    <property type="entry name" value="ThrE_Dicarb/AminoAcid_Exp"/>
</dbReference>
<dbReference type="InterPro" id="IPR020914">
    <property type="entry name" value="YjjB"/>
</dbReference>
<dbReference type="NCBIfam" id="NF007391">
    <property type="entry name" value="PRK09917.1"/>
    <property type="match status" value="1"/>
</dbReference>
<dbReference type="PANTHER" id="PTHR34390:SF1">
    <property type="entry name" value="SUCCINATE TRANSPORTER SUBUNIT YJJB-RELATED"/>
    <property type="match status" value="1"/>
</dbReference>
<dbReference type="PANTHER" id="PTHR34390">
    <property type="entry name" value="UPF0442 PROTEIN YJJB-RELATED"/>
    <property type="match status" value="1"/>
</dbReference>
<dbReference type="Pfam" id="PF12821">
    <property type="entry name" value="ThrE_2"/>
    <property type="match status" value="1"/>
</dbReference>
<protein>
    <recommendedName>
        <fullName evidence="1">Probable succinate transporter subunit YjjB</fullName>
    </recommendedName>
</protein>
<proteinExistence type="inferred from homology"/>
<keyword id="KW-0997">Cell inner membrane</keyword>
<keyword id="KW-1003">Cell membrane</keyword>
<keyword id="KW-0472">Membrane</keyword>
<keyword id="KW-1185">Reference proteome</keyword>
<keyword id="KW-0812">Transmembrane</keyword>
<keyword id="KW-1133">Transmembrane helix</keyword>
<keyword id="KW-0813">Transport</keyword>
<comment type="function">
    <text evidence="1">Involved in succinate export with YjjP. Both proteins are required for export.</text>
</comment>
<comment type="subunit">
    <text evidence="1">The transporter is composed of YjjB and YjjP.</text>
</comment>
<comment type="subcellular location">
    <subcellularLocation>
        <location evidence="1">Cell inner membrane</location>
        <topology evidence="1">Multi-pass membrane protein</topology>
    </subcellularLocation>
</comment>
<comment type="similarity">
    <text evidence="1">Belongs to the ThrE exporter (TC 2.A.79) family.</text>
</comment>
<reference key="1">
    <citation type="journal article" date="2003" name="Infect. Immun.">
        <title>Complete genome sequence and comparative genomics of Shigella flexneri serotype 2a strain 2457T.</title>
        <authorList>
            <person name="Wei J."/>
            <person name="Goldberg M.B."/>
            <person name="Burland V."/>
            <person name="Venkatesan M.M."/>
            <person name="Deng W."/>
            <person name="Fournier G."/>
            <person name="Mayhew G.F."/>
            <person name="Plunkett G. III"/>
            <person name="Rose D.J."/>
            <person name="Darling A."/>
            <person name="Mau B."/>
            <person name="Perna N.T."/>
            <person name="Payne S.M."/>
            <person name="Runyen-Janecky L.J."/>
            <person name="Zhou S."/>
            <person name="Schwartz D.C."/>
            <person name="Blattner F.R."/>
        </authorList>
    </citation>
    <scope>NUCLEOTIDE SEQUENCE [LARGE SCALE GENOMIC DNA]</scope>
    <source>
        <strain>ATCC 700930 / 2457T / Serotype 2a</strain>
    </source>
</reference>
<reference key="2">
    <citation type="journal article" date="2002" name="Nucleic Acids Res.">
        <title>Genome sequence of Shigella flexneri 2a: insights into pathogenicity through comparison with genomes of Escherichia coli K12 and O157.</title>
        <authorList>
            <person name="Jin Q."/>
            <person name="Yuan Z."/>
            <person name="Xu J."/>
            <person name="Wang Y."/>
            <person name="Shen Y."/>
            <person name="Lu W."/>
            <person name="Wang J."/>
            <person name="Liu H."/>
            <person name="Yang J."/>
            <person name="Yang F."/>
            <person name="Zhang X."/>
            <person name="Zhang J."/>
            <person name="Yang G."/>
            <person name="Wu H."/>
            <person name="Qu D."/>
            <person name="Dong J."/>
            <person name="Sun L."/>
            <person name="Xue Y."/>
            <person name="Zhao A."/>
            <person name="Gao Y."/>
            <person name="Zhu J."/>
            <person name="Kan B."/>
            <person name="Ding K."/>
            <person name="Chen S."/>
            <person name="Cheng H."/>
            <person name="Yao Z."/>
            <person name="He B."/>
            <person name="Chen R."/>
            <person name="Ma D."/>
            <person name="Qiang B."/>
            <person name="Wen Y."/>
            <person name="Hou Y."/>
            <person name="Yu J."/>
        </authorList>
    </citation>
    <scope>NUCLEOTIDE SEQUENCE [LARGE SCALE GENOMIC DNA]</scope>
    <source>
        <strain>301 / Serotype 2a</strain>
    </source>
</reference>
<accession>Q7UAJ5</accession>
<accession>Q83P11</accession>
<gene>
    <name evidence="1" type="primary">yjjB</name>
    <name type="ordered locus">SF4394</name>
    <name type="ordered locus">S4664</name>
</gene>
<name>YJJB_SHIFL</name>